<evidence type="ECO:0000255" key="1">
    <source>
        <dbReference type="PROSITE-ProRule" id="PRU00285"/>
    </source>
</evidence>
<evidence type="ECO:0000256" key="2">
    <source>
        <dbReference type="SAM" id="MobiDB-lite"/>
    </source>
</evidence>
<feature type="chain" id="PRO_0000363895" description="Small heat shock protein hspG3">
    <location>
        <begin position="1"/>
        <end position="227"/>
    </location>
</feature>
<feature type="domain" description="sHSP" evidence="1">
    <location>
        <begin position="31"/>
        <end position="227"/>
    </location>
</feature>
<feature type="region of interest" description="Disordered" evidence="2">
    <location>
        <begin position="119"/>
        <end position="164"/>
    </location>
</feature>
<dbReference type="EMBL" id="AAFI02000015">
    <property type="protein sequence ID" value="EAL69146.1"/>
    <property type="molecule type" value="Genomic_DNA"/>
</dbReference>
<dbReference type="RefSeq" id="XP_643065.1">
    <property type="nucleotide sequence ID" value="XM_637973.1"/>
</dbReference>
<dbReference type="STRING" id="44689.Q551F8"/>
<dbReference type="PaxDb" id="44689-DDB0232131"/>
<dbReference type="EnsemblProtists" id="EAL69146">
    <property type="protein sequence ID" value="EAL69146"/>
    <property type="gene ID" value="DDB_G0276607"/>
</dbReference>
<dbReference type="GeneID" id="8620584"/>
<dbReference type="KEGG" id="ddi:DDB_G0276607"/>
<dbReference type="dictyBase" id="DDB_G0276607">
    <property type="gene designation" value="hspG3"/>
</dbReference>
<dbReference type="VEuPathDB" id="AmoebaDB:DDB_G0276607"/>
<dbReference type="eggNOG" id="KOG0710">
    <property type="taxonomic scope" value="Eukaryota"/>
</dbReference>
<dbReference type="HOGENOM" id="CLU_1328489_0_0_1"/>
<dbReference type="InParanoid" id="Q551F8"/>
<dbReference type="PhylomeDB" id="Q551F8"/>
<dbReference type="PRO" id="PR:Q551F8"/>
<dbReference type="Proteomes" id="UP000002195">
    <property type="component" value="Chromosome 2"/>
</dbReference>
<dbReference type="CDD" id="cd06464">
    <property type="entry name" value="ACD_sHsps-like"/>
    <property type="match status" value="1"/>
</dbReference>
<dbReference type="Gene3D" id="2.60.40.790">
    <property type="match status" value="2"/>
</dbReference>
<dbReference type="InterPro" id="IPR002068">
    <property type="entry name" value="A-crystallin/Hsp20_dom"/>
</dbReference>
<dbReference type="InterPro" id="IPR008978">
    <property type="entry name" value="HSP20-like_chaperone"/>
</dbReference>
<dbReference type="InterPro" id="IPR051779">
    <property type="entry name" value="HspG1-11-like"/>
</dbReference>
<dbReference type="PANTHER" id="PTHR46827">
    <property type="entry name" value="HEAT SHOCK PROTEIN DDB_G0288861-RELATED"/>
    <property type="match status" value="1"/>
</dbReference>
<dbReference type="PANTHER" id="PTHR46827:SF1">
    <property type="entry name" value="HEAT SHOCK PROTEIN DDB_G0288861-RELATED"/>
    <property type="match status" value="1"/>
</dbReference>
<dbReference type="Pfam" id="PF00011">
    <property type="entry name" value="HSP20"/>
    <property type="match status" value="1"/>
</dbReference>
<dbReference type="SUPFAM" id="SSF81995">
    <property type="entry name" value="beta-sandwich domain of Sec23/24"/>
    <property type="match status" value="1"/>
</dbReference>
<dbReference type="SUPFAM" id="SSF49764">
    <property type="entry name" value="HSP20-like chaperones"/>
    <property type="match status" value="1"/>
</dbReference>
<dbReference type="PROSITE" id="PS01031">
    <property type="entry name" value="SHSP"/>
    <property type="match status" value="1"/>
</dbReference>
<proteinExistence type="inferred from homology"/>
<comment type="similarity">
    <text evidence="1">Belongs to the small heat shock protein (HSP20) family.</text>
</comment>
<protein>
    <recommendedName>
        <fullName>Small heat shock protein hspG3</fullName>
    </recommendedName>
</protein>
<sequence>MTTLFDILNTLNNNNNNNNNYAGCKRQHSINKRVDIIPSMDVTLTNDKLIIETELTGVSKNDIDINIKDSILIIQGEKKKSIIKHQQQQQHQQQQQQQQQQQQQQQQQQQQQQQQQQQQQQQLENSNKENDEPSIEEFEEDVKSKSELNKTTLNTTENKDEDKTTQNISKKFISERSFGNFKRYLNLSEILYQLDLNSINTQFENGLLTITIKKKFDSSNTIKININ</sequence>
<reference key="1">
    <citation type="journal article" date="2002" name="Nature">
        <title>Sequence and analysis of chromosome 2 of Dictyostelium discoideum.</title>
        <authorList>
            <person name="Gloeckner G."/>
            <person name="Eichinger L."/>
            <person name="Szafranski K."/>
            <person name="Pachebat J.A."/>
            <person name="Bankier A.T."/>
            <person name="Dear P.H."/>
            <person name="Lehmann R."/>
            <person name="Baumgart C."/>
            <person name="Parra G."/>
            <person name="Abril J.F."/>
            <person name="Guigo R."/>
            <person name="Kumpf K."/>
            <person name="Tunggal B."/>
            <person name="Cox E.C."/>
            <person name="Quail M.A."/>
            <person name="Platzer M."/>
            <person name="Rosenthal A."/>
            <person name="Noegel A.A."/>
        </authorList>
    </citation>
    <scope>NUCLEOTIDE SEQUENCE [LARGE SCALE GENOMIC DNA]</scope>
    <source>
        <strain>AX4</strain>
    </source>
</reference>
<reference key="2">
    <citation type="journal article" date="2005" name="Nature">
        <title>The genome of the social amoeba Dictyostelium discoideum.</title>
        <authorList>
            <person name="Eichinger L."/>
            <person name="Pachebat J.A."/>
            <person name="Gloeckner G."/>
            <person name="Rajandream M.A."/>
            <person name="Sucgang R."/>
            <person name="Berriman M."/>
            <person name="Song J."/>
            <person name="Olsen R."/>
            <person name="Szafranski K."/>
            <person name="Xu Q."/>
            <person name="Tunggal B."/>
            <person name="Kummerfeld S."/>
            <person name="Madera M."/>
            <person name="Konfortov B.A."/>
            <person name="Rivero F."/>
            <person name="Bankier A.T."/>
            <person name="Lehmann R."/>
            <person name="Hamlin N."/>
            <person name="Davies R."/>
            <person name="Gaudet P."/>
            <person name="Fey P."/>
            <person name="Pilcher K."/>
            <person name="Chen G."/>
            <person name="Saunders D."/>
            <person name="Sodergren E.J."/>
            <person name="Davis P."/>
            <person name="Kerhornou A."/>
            <person name="Nie X."/>
            <person name="Hall N."/>
            <person name="Anjard C."/>
            <person name="Hemphill L."/>
            <person name="Bason N."/>
            <person name="Farbrother P."/>
            <person name="Desany B."/>
            <person name="Just E."/>
            <person name="Morio T."/>
            <person name="Rost R."/>
            <person name="Churcher C.M."/>
            <person name="Cooper J."/>
            <person name="Haydock S."/>
            <person name="van Driessche N."/>
            <person name="Cronin A."/>
            <person name="Goodhead I."/>
            <person name="Muzny D.M."/>
            <person name="Mourier T."/>
            <person name="Pain A."/>
            <person name="Lu M."/>
            <person name="Harper D."/>
            <person name="Lindsay R."/>
            <person name="Hauser H."/>
            <person name="James K.D."/>
            <person name="Quiles M."/>
            <person name="Madan Babu M."/>
            <person name="Saito T."/>
            <person name="Buchrieser C."/>
            <person name="Wardroper A."/>
            <person name="Felder M."/>
            <person name="Thangavelu M."/>
            <person name="Johnson D."/>
            <person name="Knights A."/>
            <person name="Loulseged H."/>
            <person name="Mungall K.L."/>
            <person name="Oliver K."/>
            <person name="Price C."/>
            <person name="Quail M.A."/>
            <person name="Urushihara H."/>
            <person name="Hernandez J."/>
            <person name="Rabbinowitsch E."/>
            <person name="Steffen D."/>
            <person name="Sanders M."/>
            <person name="Ma J."/>
            <person name="Kohara Y."/>
            <person name="Sharp S."/>
            <person name="Simmonds M.N."/>
            <person name="Spiegler S."/>
            <person name="Tivey A."/>
            <person name="Sugano S."/>
            <person name="White B."/>
            <person name="Walker D."/>
            <person name="Woodward J.R."/>
            <person name="Winckler T."/>
            <person name="Tanaka Y."/>
            <person name="Shaulsky G."/>
            <person name="Schleicher M."/>
            <person name="Weinstock G.M."/>
            <person name="Rosenthal A."/>
            <person name="Cox E.C."/>
            <person name="Chisholm R.L."/>
            <person name="Gibbs R.A."/>
            <person name="Loomis W.F."/>
            <person name="Platzer M."/>
            <person name="Kay R.R."/>
            <person name="Williams J.G."/>
            <person name="Dear P.H."/>
            <person name="Noegel A.A."/>
            <person name="Barrell B.G."/>
            <person name="Kuspa A."/>
        </authorList>
    </citation>
    <scope>NUCLEOTIDE SEQUENCE [LARGE SCALE GENOMIC DNA]</scope>
    <source>
        <strain>AX4</strain>
    </source>
</reference>
<gene>
    <name type="primary">hspG3</name>
    <name type="ORF">DDB_G0276607</name>
</gene>
<name>HSPG3_DICDI</name>
<organism>
    <name type="scientific">Dictyostelium discoideum</name>
    <name type="common">Social amoeba</name>
    <dbReference type="NCBI Taxonomy" id="44689"/>
    <lineage>
        <taxon>Eukaryota</taxon>
        <taxon>Amoebozoa</taxon>
        <taxon>Evosea</taxon>
        <taxon>Eumycetozoa</taxon>
        <taxon>Dictyostelia</taxon>
        <taxon>Dictyosteliales</taxon>
        <taxon>Dictyosteliaceae</taxon>
        <taxon>Dictyostelium</taxon>
    </lineage>
</organism>
<accession>Q551F8</accession>
<accession>Q869N5</accession>
<keyword id="KW-1185">Reference proteome</keyword>
<keyword id="KW-0346">Stress response</keyword>